<protein>
    <recommendedName>
        <fullName evidence="1">Tyrosine recombinase XerC</fullName>
    </recommendedName>
</protein>
<organism>
    <name type="scientific">Vibrio cholerae serotype O1 (strain ATCC 39541 / Classical Ogawa 395 / O395)</name>
    <dbReference type="NCBI Taxonomy" id="345073"/>
    <lineage>
        <taxon>Bacteria</taxon>
        <taxon>Pseudomonadati</taxon>
        <taxon>Pseudomonadota</taxon>
        <taxon>Gammaproteobacteria</taxon>
        <taxon>Vibrionales</taxon>
        <taxon>Vibrionaceae</taxon>
        <taxon>Vibrio</taxon>
    </lineage>
</organism>
<feature type="chain" id="PRO_1000073673" description="Tyrosine recombinase XerC">
    <location>
        <begin position="1"/>
        <end position="311"/>
    </location>
</feature>
<feature type="domain" description="Core-binding (CB)" evidence="3">
    <location>
        <begin position="11"/>
        <end position="97"/>
    </location>
</feature>
<feature type="domain" description="Tyr recombinase" evidence="2">
    <location>
        <begin position="118"/>
        <end position="298"/>
    </location>
</feature>
<feature type="active site" evidence="1">
    <location>
        <position position="157"/>
    </location>
</feature>
<feature type="active site" evidence="1">
    <location>
        <position position="181"/>
    </location>
</feature>
<feature type="active site" evidence="1">
    <location>
        <position position="250"/>
    </location>
</feature>
<feature type="active site" evidence="1">
    <location>
        <position position="253"/>
    </location>
</feature>
<feature type="active site" evidence="1">
    <location>
        <position position="276"/>
    </location>
</feature>
<feature type="active site" description="O-(3'-phospho-DNA)-tyrosine intermediate" evidence="1">
    <location>
        <position position="285"/>
    </location>
</feature>
<comment type="function">
    <text evidence="1">Site-specific tyrosine recombinase, which acts by catalyzing the cutting and rejoining of the recombining DNA molecules. The XerC-XerD complex is essential to convert dimers of the bacterial chromosome into monomers to permit their segregation at cell division. It also contributes to the segregational stability of plasmids.</text>
</comment>
<comment type="subunit">
    <text evidence="1">Forms a cyclic heterotetrameric complex composed of two molecules of XerC and two molecules of XerD.</text>
</comment>
<comment type="subcellular location">
    <subcellularLocation>
        <location evidence="1">Cytoplasm</location>
    </subcellularLocation>
</comment>
<comment type="similarity">
    <text evidence="1">Belongs to the 'phage' integrase family. XerC subfamily.</text>
</comment>
<keyword id="KW-0131">Cell cycle</keyword>
<keyword id="KW-0132">Cell division</keyword>
<keyword id="KW-0159">Chromosome partition</keyword>
<keyword id="KW-0963">Cytoplasm</keyword>
<keyword id="KW-0229">DNA integration</keyword>
<keyword id="KW-0233">DNA recombination</keyword>
<keyword id="KW-0238">DNA-binding</keyword>
<reference key="1">
    <citation type="submission" date="2007-03" db="EMBL/GenBank/DDBJ databases">
        <authorList>
            <person name="Heidelberg J."/>
        </authorList>
    </citation>
    <scope>NUCLEOTIDE SEQUENCE [LARGE SCALE GENOMIC DNA]</scope>
    <source>
        <strain>ATCC 39541 / Classical Ogawa 395 / O395</strain>
    </source>
</reference>
<reference key="2">
    <citation type="journal article" date="2008" name="PLoS ONE">
        <title>A recalibrated molecular clock and independent origins for the cholera pandemic clones.</title>
        <authorList>
            <person name="Feng L."/>
            <person name="Reeves P.R."/>
            <person name="Lan R."/>
            <person name="Ren Y."/>
            <person name="Gao C."/>
            <person name="Zhou Z."/>
            <person name="Ren Y."/>
            <person name="Cheng J."/>
            <person name="Wang W."/>
            <person name="Wang J."/>
            <person name="Qian W."/>
            <person name="Li D."/>
            <person name="Wang L."/>
        </authorList>
    </citation>
    <scope>NUCLEOTIDE SEQUENCE [LARGE SCALE GENOMIC DNA]</scope>
    <source>
        <strain>ATCC 39541 / Classical Ogawa 395 / O395</strain>
    </source>
</reference>
<accession>A5F4I4</accession>
<accession>C3M2B6</accession>
<name>XERC_VIBC3</name>
<sequence>MKNDERTPLPDALAQPLERFYAYLHTEKGLSLYTQRNYKQQLETMTQYLVQVGLTHWTQLDSAWVRQLVMQGKRQGMKASSIATRLSSLRSFLDFLILRGELQANPAKGVSAPRKQRTLPKNLDVDEMAQLLEVTDDDPLSIRDRAIMELMYGAGLRLAELVSIDIKDVNLSEGEIRVIGKGNKERKVWFAGQAQEWVGKWLKLRSQLADSAETALFVSKLGTRISHRSVQKRMAEWGQKQAVASHISPHKLRHSFATHMLESSNNLRAVQELLGHENIATTQIYTHLDFQHLAQVYDQAHPRARKKNKDD</sequence>
<evidence type="ECO:0000255" key="1">
    <source>
        <dbReference type="HAMAP-Rule" id="MF_01808"/>
    </source>
</evidence>
<evidence type="ECO:0000255" key="2">
    <source>
        <dbReference type="PROSITE-ProRule" id="PRU01246"/>
    </source>
</evidence>
<evidence type="ECO:0000255" key="3">
    <source>
        <dbReference type="PROSITE-ProRule" id="PRU01248"/>
    </source>
</evidence>
<gene>
    <name evidence="1" type="primary">xerC</name>
    <name type="ordered locus">VC0395_A2391</name>
    <name type="ordered locus">VC395_0052</name>
</gene>
<dbReference type="EMBL" id="CP000627">
    <property type="protein sequence ID" value="ABQ20095.1"/>
    <property type="molecule type" value="Genomic_DNA"/>
</dbReference>
<dbReference type="EMBL" id="CP001235">
    <property type="protein sequence ID" value="ACP08080.1"/>
    <property type="molecule type" value="Genomic_DNA"/>
</dbReference>
<dbReference type="RefSeq" id="WP_000786732.1">
    <property type="nucleotide sequence ID" value="NZ_JAACZH010000014.1"/>
</dbReference>
<dbReference type="SMR" id="A5F4I4"/>
<dbReference type="KEGG" id="vco:VC0395_A2391"/>
<dbReference type="KEGG" id="vcr:VC395_0052"/>
<dbReference type="PATRIC" id="fig|345073.21.peg.50"/>
<dbReference type="eggNOG" id="COG4973">
    <property type="taxonomic scope" value="Bacteria"/>
</dbReference>
<dbReference type="HOGENOM" id="CLU_027562_9_0_6"/>
<dbReference type="OrthoDB" id="9801717at2"/>
<dbReference type="Proteomes" id="UP000000249">
    <property type="component" value="Chromosome 2"/>
</dbReference>
<dbReference type="GO" id="GO:0005737">
    <property type="term" value="C:cytoplasm"/>
    <property type="evidence" value="ECO:0007669"/>
    <property type="project" value="UniProtKB-SubCell"/>
</dbReference>
<dbReference type="GO" id="GO:0003677">
    <property type="term" value="F:DNA binding"/>
    <property type="evidence" value="ECO:0007669"/>
    <property type="project" value="UniProtKB-KW"/>
</dbReference>
<dbReference type="GO" id="GO:0009037">
    <property type="term" value="F:tyrosine-based site-specific recombinase activity"/>
    <property type="evidence" value="ECO:0007669"/>
    <property type="project" value="UniProtKB-UniRule"/>
</dbReference>
<dbReference type="GO" id="GO:0051301">
    <property type="term" value="P:cell division"/>
    <property type="evidence" value="ECO:0007669"/>
    <property type="project" value="UniProtKB-KW"/>
</dbReference>
<dbReference type="GO" id="GO:0007059">
    <property type="term" value="P:chromosome segregation"/>
    <property type="evidence" value="ECO:0007669"/>
    <property type="project" value="UniProtKB-UniRule"/>
</dbReference>
<dbReference type="GO" id="GO:0006313">
    <property type="term" value="P:DNA transposition"/>
    <property type="evidence" value="ECO:0007669"/>
    <property type="project" value="UniProtKB-UniRule"/>
</dbReference>
<dbReference type="CDD" id="cd00798">
    <property type="entry name" value="INT_XerDC_C"/>
    <property type="match status" value="1"/>
</dbReference>
<dbReference type="FunFam" id="1.10.443.10:FF:000002">
    <property type="entry name" value="Tyrosine recombinase XerC"/>
    <property type="match status" value="1"/>
</dbReference>
<dbReference type="Gene3D" id="1.10.150.130">
    <property type="match status" value="1"/>
</dbReference>
<dbReference type="Gene3D" id="1.10.443.10">
    <property type="entry name" value="Intergrase catalytic core"/>
    <property type="match status" value="1"/>
</dbReference>
<dbReference type="HAMAP" id="MF_01808">
    <property type="entry name" value="Recomb_XerC_XerD"/>
    <property type="match status" value="1"/>
</dbReference>
<dbReference type="InterPro" id="IPR044068">
    <property type="entry name" value="CB"/>
</dbReference>
<dbReference type="InterPro" id="IPR011010">
    <property type="entry name" value="DNA_brk_join_enz"/>
</dbReference>
<dbReference type="InterPro" id="IPR013762">
    <property type="entry name" value="Integrase-like_cat_sf"/>
</dbReference>
<dbReference type="InterPro" id="IPR002104">
    <property type="entry name" value="Integrase_catalytic"/>
</dbReference>
<dbReference type="InterPro" id="IPR010998">
    <property type="entry name" value="Integrase_recombinase_N"/>
</dbReference>
<dbReference type="InterPro" id="IPR004107">
    <property type="entry name" value="Integrase_SAM-like_N"/>
</dbReference>
<dbReference type="InterPro" id="IPR011931">
    <property type="entry name" value="Recomb_XerC"/>
</dbReference>
<dbReference type="InterPro" id="IPR023009">
    <property type="entry name" value="Tyrosine_recombinase_XerC/XerD"/>
</dbReference>
<dbReference type="InterPro" id="IPR050090">
    <property type="entry name" value="Tyrosine_recombinase_XerCD"/>
</dbReference>
<dbReference type="NCBIfam" id="TIGR02224">
    <property type="entry name" value="recomb_XerC"/>
    <property type="match status" value="1"/>
</dbReference>
<dbReference type="PANTHER" id="PTHR30349">
    <property type="entry name" value="PHAGE INTEGRASE-RELATED"/>
    <property type="match status" value="1"/>
</dbReference>
<dbReference type="PANTHER" id="PTHR30349:SF81">
    <property type="entry name" value="TYROSINE RECOMBINASE XERC"/>
    <property type="match status" value="1"/>
</dbReference>
<dbReference type="Pfam" id="PF02899">
    <property type="entry name" value="Phage_int_SAM_1"/>
    <property type="match status" value="1"/>
</dbReference>
<dbReference type="Pfam" id="PF00589">
    <property type="entry name" value="Phage_integrase"/>
    <property type="match status" value="1"/>
</dbReference>
<dbReference type="SUPFAM" id="SSF56349">
    <property type="entry name" value="DNA breaking-rejoining enzymes"/>
    <property type="match status" value="1"/>
</dbReference>
<dbReference type="SUPFAM" id="SSF47823">
    <property type="entry name" value="lambda integrase-like, N-terminal domain"/>
    <property type="match status" value="1"/>
</dbReference>
<dbReference type="PROSITE" id="PS51900">
    <property type="entry name" value="CB"/>
    <property type="match status" value="1"/>
</dbReference>
<dbReference type="PROSITE" id="PS51898">
    <property type="entry name" value="TYR_RECOMBINASE"/>
    <property type="match status" value="1"/>
</dbReference>
<proteinExistence type="inferred from homology"/>